<accession>A7H5U2</accession>
<feature type="chain" id="PRO_1000051876" description="Small ribosomal subunit protein uS13">
    <location>
        <begin position="1"/>
        <end position="121"/>
    </location>
</feature>
<feature type="region of interest" description="Disordered" evidence="2">
    <location>
        <begin position="95"/>
        <end position="121"/>
    </location>
</feature>
<reference key="1">
    <citation type="submission" date="2007-07" db="EMBL/GenBank/DDBJ databases">
        <title>Complete genome sequence of Campylobacter jejuni subsp doylei 269.97 isolated from human blood.</title>
        <authorList>
            <person name="Fouts D.E."/>
            <person name="Mongodin E.F."/>
            <person name="Puiu D."/>
            <person name="Sebastian Y."/>
            <person name="Miller W.G."/>
            <person name="Mandrell R.E."/>
            <person name="Lastovica A.J."/>
            <person name="Nelson K.E."/>
        </authorList>
    </citation>
    <scope>NUCLEOTIDE SEQUENCE [LARGE SCALE GENOMIC DNA]</scope>
    <source>
        <strain>ATCC BAA-1458 / RM4099 / 269.97</strain>
    </source>
</reference>
<organism>
    <name type="scientific">Campylobacter jejuni subsp. doylei (strain ATCC BAA-1458 / RM4099 / 269.97)</name>
    <dbReference type="NCBI Taxonomy" id="360109"/>
    <lineage>
        <taxon>Bacteria</taxon>
        <taxon>Pseudomonadati</taxon>
        <taxon>Campylobacterota</taxon>
        <taxon>Epsilonproteobacteria</taxon>
        <taxon>Campylobacterales</taxon>
        <taxon>Campylobacteraceae</taxon>
        <taxon>Campylobacter</taxon>
    </lineage>
</organism>
<proteinExistence type="inferred from homology"/>
<sequence length="121" mass="13735">MARIAGVDLPKKKRIEYGLTYIYGIGLFTSRKILDKVGISYDKRVHELSEDEAAAIRKEIQENYMVEGDLRKQVAMDIKALMDLGSFRGLRHRKGLPVRGQKTKTNARTRKGKRKTVGAKS</sequence>
<dbReference type="EMBL" id="CP000768">
    <property type="protein sequence ID" value="ABS43444.1"/>
    <property type="molecule type" value="Genomic_DNA"/>
</dbReference>
<dbReference type="SMR" id="A7H5U2"/>
<dbReference type="KEGG" id="cjd:JJD26997_1945"/>
<dbReference type="HOGENOM" id="CLU_103849_1_2_7"/>
<dbReference type="Proteomes" id="UP000002302">
    <property type="component" value="Chromosome"/>
</dbReference>
<dbReference type="GO" id="GO:0005829">
    <property type="term" value="C:cytosol"/>
    <property type="evidence" value="ECO:0007669"/>
    <property type="project" value="TreeGrafter"/>
</dbReference>
<dbReference type="GO" id="GO:0015935">
    <property type="term" value="C:small ribosomal subunit"/>
    <property type="evidence" value="ECO:0007669"/>
    <property type="project" value="TreeGrafter"/>
</dbReference>
<dbReference type="GO" id="GO:0019843">
    <property type="term" value="F:rRNA binding"/>
    <property type="evidence" value="ECO:0007669"/>
    <property type="project" value="UniProtKB-UniRule"/>
</dbReference>
<dbReference type="GO" id="GO:0003735">
    <property type="term" value="F:structural constituent of ribosome"/>
    <property type="evidence" value="ECO:0007669"/>
    <property type="project" value="InterPro"/>
</dbReference>
<dbReference type="GO" id="GO:0000049">
    <property type="term" value="F:tRNA binding"/>
    <property type="evidence" value="ECO:0007669"/>
    <property type="project" value="UniProtKB-UniRule"/>
</dbReference>
<dbReference type="GO" id="GO:0006412">
    <property type="term" value="P:translation"/>
    <property type="evidence" value="ECO:0007669"/>
    <property type="project" value="UniProtKB-UniRule"/>
</dbReference>
<dbReference type="FunFam" id="1.10.8.50:FF:000001">
    <property type="entry name" value="30S ribosomal protein S13"/>
    <property type="match status" value="1"/>
</dbReference>
<dbReference type="FunFam" id="4.10.910.10:FF:000001">
    <property type="entry name" value="30S ribosomal protein S13"/>
    <property type="match status" value="1"/>
</dbReference>
<dbReference type="Gene3D" id="1.10.8.50">
    <property type="match status" value="1"/>
</dbReference>
<dbReference type="Gene3D" id="4.10.910.10">
    <property type="entry name" value="30s ribosomal protein s13, domain 2"/>
    <property type="match status" value="1"/>
</dbReference>
<dbReference type="HAMAP" id="MF_01315">
    <property type="entry name" value="Ribosomal_uS13"/>
    <property type="match status" value="1"/>
</dbReference>
<dbReference type="InterPro" id="IPR027437">
    <property type="entry name" value="Rbsml_uS13_C"/>
</dbReference>
<dbReference type="InterPro" id="IPR001892">
    <property type="entry name" value="Ribosomal_uS13"/>
</dbReference>
<dbReference type="InterPro" id="IPR010979">
    <property type="entry name" value="Ribosomal_uS13-like_H2TH"/>
</dbReference>
<dbReference type="InterPro" id="IPR019980">
    <property type="entry name" value="Ribosomal_uS13_bac-type"/>
</dbReference>
<dbReference type="InterPro" id="IPR018269">
    <property type="entry name" value="Ribosomal_uS13_CS"/>
</dbReference>
<dbReference type="NCBIfam" id="TIGR03631">
    <property type="entry name" value="uS13_bact"/>
    <property type="match status" value="1"/>
</dbReference>
<dbReference type="PANTHER" id="PTHR10871">
    <property type="entry name" value="30S RIBOSOMAL PROTEIN S13/40S RIBOSOMAL PROTEIN S18"/>
    <property type="match status" value="1"/>
</dbReference>
<dbReference type="PANTHER" id="PTHR10871:SF1">
    <property type="entry name" value="SMALL RIBOSOMAL SUBUNIT PROTEIN US13M"/>
    <property type="match status" value="1"/>
</dbReference>
<dbReference type="Pfam" id="PF00416">
    <property type="entry name" value="Ribosomal_S13"/>
    <property type="match status" value="1"/>
</dbReference>
<dbReference type="PIRSF" id="PIRSF002134">
    <property type="entry name" value="Ribosomal_S13"/>
    <property type="match status" value="1"/>
</dbReference>
<dbReference type="SUPFAM" id="SSF46946">
    <property type="entry name" value="S13-like H2TH domain"/>
    <property type="match status" value="1"/>
</dbReference>
<dbReference type="PROSITE" id="PS00646">
    <property type="entry name" value="RIBOSOMAL_S13_1"/>
    <property type="match status" value="1"/>
</dbReference>
<dbReference type="PROSITE" id="PS50159">
    <property type="entry name" value="RIBOSOMAL_S13_2"/>
    <property type="match status" value="1"/>
</dbReference>
<keyword id="KW-0687">Ribonucleoprotein</keyword>
<keyword id="KW-0689">Ribosomal protein</keyword>
<keyword id="KW-0694">RNA-binding</keyword>
<keyword id="KW-0699">rRNA-binding</keyword>
<keyword id="KW-0820">tRNA-binding</keyword>
<name>RS13_CAMJD</name>
<gene>
    <name evidence="1" type="primary">rpsM</name>
    <name type="ordered locus">JJD26997_1945</name>
</gene>
<comment type="function">
    <text evidence="1">Located at the top of the head of the 30S subunit, it contacts several helices of the 16S rRNA. In the 70S ribosome it contacts the 23S rRNA (bridge B1a) and protein L5 of the 50S subunit (bridge B1b), connecting the 2 subunits; these bridges are implicated in subunit movement. Contacts the tRNAs in the A and P-sites.</text>
</comment>
<comment type="subunit">
    <text evidence="1">Part of the 30S ribosomal subunit. Forms a loose heterodimer with protein S19. Forms two bridges to the 50S subunit in the 70S ribosome.</text>
</comment>
<comment type="similarity">
    <text evidence="1">Belongs to the universal ribosomal protein uS13 family.</text>
</comment>
<protein>
    <recommendedName>
        <fullName evidence="1">Small ribosomal subunit protein uS13</fullName>
    </recommendedName>
    <alternativeName>
        <fullName evidence="3">30S ribosomal protein S13</fullName>
    </alternativeName>
</protein>
<evidence type="ECO:0000255" key="1">
    <source>
        <dbReference type="HAMAP-Rule" id="MF_01315"/>
    </source>
</evidence>
<evidence type="ECO:0000256" key="2">
    <source>
        <dbReference type="SAM" id="MobiDB-lite"/>
    </source>
</evidence>
<evidence type="ECO:0000305" key="3"/>